<reference key="1">
    <citation type="journal article" date="2003" name="Proc. Natl. Acad. Sci. U.S.A.">
        <title>Reductive genome evolution in Buchnera aphidicola.</title>
        <authorList>
            <person name="van Ham R.C.H.J."/>
            <person name="Kamerbeek J."/>
            <person name="Palacios C."/>
            <person name="Rausell C."/>
            <person name="Abascal F."/>
            <person name="Bastolla U."/>
            <person name="Fernandez J.M."/>
            <person name="Jimenez L."/>
            <person name="Postigo M."/>
            <person name="Silva F.J."/>
            <person name="Tamames J."/>
            <person name="Viguera E."/>
            <person name="Latorre A."/>
            <person name="Valencia A."/>
            <person name="Moran F."/>
            <person name="Moya A."/>
        </authorList>
    </citation>
    <scope>NUCLEOTIDE SEQUENCE [LARGE SCALE GENOMIC DNA]</scope>
    <source>
        <strain>Bp</strain>
    </source>
</reference>
<protein>
    <recommendedName>
        <fullName evidence="1">Bifunctional purine biosynthesis protein PurH</fullName>
    </recommendedName>
    <domain>
        <recommendedName>
            <fullName evidence="1">Phosphoribosylaminoimidazolecarboxamide formyltransferase</fullName>
            <ecNumber evidence="1">2.1.2.3</ecNumber>
        </recommendedName>
        <alternativeName>
            <fullName evidence="1">AICAR transformylase</fullName>
        </alternativeName>
    </domain>
    <domain>
        <recommendedName>
            <fullName evidence="1">IMP cyclohydrolase</fullName>
            <ecNumber evidence="1">3.5.4.10</ecNumber>
        </recommendedName>
        <alternativeName>
            <fullName evidence="1">ATIC</fullName>
        </alternativeName>
        <alternativeName>
            <fullName evidence="1">IMP synthase</fullName>
        </alternativeName>
        <alternativeName>
            <fullName evidence="1">Inosinicase</fullName>
        </alternativeName>
    </domain>
</protein>
<proteinExistence type="inferred from homology"/>
<evidence type="ECO:0000255" key="1">
    <source>
        <dbReference type="HAMAP-Rule" id="MF_00139"/>
    </source>
</evidence>
<evidence type="ECO:0000255" key="2">
    <source>
        <dbReference type="PROSITE-ProRule" id="PRU01202"/>
    </source>
</evidence>
<evidence type="ECO:0000305" key="3"/>
<comment type="catalytic activity">
    <reaction evidence="1">
        <text>(6R)-10-formyltetrahydrofolate + 5-amino-1-(5-phospho-beta-D-ribosyl)imidazole-4-carboxamide = 5-formamido-1-(5-phospho-D-ribosyl)imidazole-4-carboxamide + (6S)-5,6,7,8-tetrahydrofolate</text>
        <dbReference type="Rhea" id="RHEA:22192"/>
        <dbReference type="ChEBI" id="CHEBI:57453"/>
        <dbReference type="ChEBI" id="CHEBI:58467"/>
        <dbReference type="ChEBI" id="CHEBI:58475"/>
        <dbReference type="ChEBI" id="CHEBI:195366"/>
        <dbReference type="EC" id="2.1.2.3"/>
    </reaction>
</comment>
<comment type="catalytic activity">
    <reaction evidence="1">
        <text>IMP + H2O = 5-formamido-1-(5-phospho-D-ribosyl)imidazole-4-carboxamide</text>
        <dbReference type="Rhea" id="RHEA:18445"/>
        <dbReference type="ChEBI" id="CHEBI:15377"/>
        <dbReference type="ChEBI" id="CHEBI:58053"/>
        <dbReference type="ChEBI" id="CHEBI:58467"/>
        <dbReference type="EC" id="3.5.4.10"/>
    </reaction>
</comment>
<comment type="pathway">
    <text evidence="1">Purine metabolism; IMP biosynthesis via de novo pathway; 5-formamido-1-(5-phospho-D-ribosyl)imidazole-4-carboxamide from 5-amino-1-(5-phospho-D-ribosyl)imidazole-4-carboxamide (10-formyl THF route): step 1/1.</text>
</comment>
<comment type="pathway">
    <text evidence="1">Purine metabolism; IMP biosynthesis via de novo pathway; IMP from 5-formamido-1-(5-phospho-D-ribosyl)imidazole-4-carboxamide: step 1/1.</text>
</comment>
<comment type="domain">
    <text evidence="1">The IMP cyclohydrolase activity resides in the N-terminal region.</text>
</comment>
<comment type="similarity">
    <text evidence="1">Belongs to the PurH family.</text>
</comment>
<comment type="sequence caution" evidence="3">
    <conflict type="erroneous initiation">
        <sequence resource="EMBL-CDS" id="AAO26775"/>
    </conflict>
</comment>
<sequence>MTNRNVIKNVLISVSDTSNIIEFSKSLISKNIKLFATKGTANFLKKNNIYATDITNYTNFPEIMNGRIKTLHHKIYASILAQPKHDKKTIEKYNIILMDIVVINFYPFEEASNNTNLHLNDIIEHIDIGGPAIVRAAAKNYKNVLVVTQPNLYQSIVNEMNLNNNIISETTKLKFATIAFKHTMNYDNNIYQYLSKKNKTVPKNTQLQTLLPSHLTINFKKKQDLCYGENKQQQASWYTNTSKNTSGRMKIKQLQGKILSYNNLSDIHLALSCIHEFNKTTCAIIKHGNPCGVATAKNNDQAYKLAYETDPISAFGGIIVFNQKLNDVTARKIIKTQFSEIILAPDFTQEAKKIFDKKPNLRIIKYDPNYNYLNYNIDIKSIYGDILVQSNTNSIININQWDIVSKKRPNEQEINDAKFALRVVKHLKSNSIVLIKNQITISIGSGQTSRIDATKIAIYKANNNNISLNHTTLASDAFFPFSDSIDLISKSGITCIVQPGGSIRDNEIIMSANKYNISMIFTKQRYFKH</sequence>
<accession>Q89B23</accession>
<dbReference type="EC" id="2.1.2.3" evidence="1"/>
<dbReference type="EC" id="3.5.4.10" evidence="1"/>
<dbReference type="EMBL" id="AE016826">
    <property type="protein sequence ID" value="AAO26775.1"/>
    <property type="status" value="ALT_INIT"/>
    <property type="molecule type" value="Genomic_DNA"/>
</dbReference>
<dbReference type="RefSeq" id="WP_044010448.1">
    <property type="nucleotide sequence ID" value="NC_004545.1"/>
</dbReference>
<dbReference type="SMR" id="Q89B23"/>
<dbReference type="STRING" id="224915.bbp_032"/>
<dbReference type="KEGG" id="bab:bbp_032"/>
<dbReference type="eggNOG" id="COG0138">
    <property type="taxonomic scope" value="Bacteria"/>
</dbReference>
<dbReference type="HOGENOM" id="CLU_016316_5_2_6"/>
<dbReference type="UniPathway" id="UPA00074">
    <property type="reaction ID" value="UER00133"/>
</dbReference>
<dbReference type="UniPathway" id="UPA00074">
    <property type="reaction ID" value="UER00135"/>
</dbReference>
<dbReference type="Proteomes" id="UP000000601">
    <property type="component" value="Chromosome"/>
</dbReference>
<dbReference type="GO" id="GO:0005829">
    <property type="term" value="C:cytosol"/>
    <property type="evidence" value="ECO:0007669"/>
    <property type="project" value="TreeGrafter"/>
</dbReference>
<dbReference type="GO" id="GO:0003937">
    <property type="term" value="F:IMP cyclohydrolase activity"/>
    <property type="evidence" value="ECO:0007669"/>
    <property type="project" value="UniProtKB-UniRule"/>
</dbReference>
<dbReference type="GO" id="GO:0004643">
    <property type="term" value="F:phosphoribosylaminoimidazolecarboxamide formyltransferase activity"/>
    <property type="evidence" value="ECO:0007669"/>
    <property type="project" value="UniProtKB-UniRule"/>
</dbReference>
<dbReference type="GO" id="GO:0006189">
    <property type="term" value="P:'de novo' IMP biosynthetic process"/>
    <property type="evidence" value="ECO:0007669"/>
    <property type="project" value="UniProtKB-UniRule"/>
</dbReference>
<dbReference type="CDD" id="cd01421">
    <property type="entry name" value="IMPCH"/>
    <property type="match status" value="1"/>
</dbReference>
<dbReference type="FunFam" id="3.40.140.20:FF:000001">
    <property type="entry name" value="Bifunctional purine biosynthesis protein PurH"/>
    <property type="match status" value="1"/>
</dbReference>
<dbReference type="FunFam" id="3.40.50.1380:FF:000001">
    <property type="entry name" value="Bifunctional purine biosynthesis protein PurH"/>
    <property type="match status" value="1"/>
</dbReference>
<dbReference type="Gene3D" id="3.40.140.20">
    <property type="match status" value="2"/>
</dbReference>
<dbReference type="Gene3D" id="3.40.50.1380">
    <property type="entry name" value="Methylglyoxal synthase-like domain"/>
    <property type="match status" value="1"/>
</dbReference>
<dbReference type="HAMAP" id="MF_00139">
    <property type="entry name" value="PurH"/>
    <property type="match status" value="1"/>
</dbReference>
<dbReference type="InterPro" id="IPR024051">
    <property type="entry name" value="AICAR_Tfase_dup_dom_sf"/>
</dbReference>
<dbReference type="InterPro" id="IPR016193">
    <property type="entry name" value="Cytidine_deaminase-like"/>
</dbReference>
<dbReference type="InterPro" id="IPR011607">
    <property type="entry name" value="MGS-like_dom"/>
</dbReference>
<dbReference type="InterPro" id="IPR036914">
    <property type="entry name" value="MGS-like_dom_sf"/>
</dbReference>
<dbReference type="InterPro" id="IPR002695">
    <property type="entry name" value="PurH-like"/>
</dbReference>
<dbReference type="NCBIfam" id="NF002049">
    <property type="entry name" value="PRK00881.1"/>
    <property type="match status" value="1"/>
</dbReference>
<dbReference type="NCBIfam" id="TIGR00355">
    <property type="entry name" value="purH"/>
    <property type="match status" value="1"/>
</dbReference>
<dbReference type="PANTHER" id="PTHR11692:SF0">
    <property type="entry name" value="BIFUNCTIONAL PURINE BIOSYNTHESIS PROTEIN ATIC"/>
    <property type="match status" value="1"/>
</dbReference>
<dbReference type="PANTHER" id="PTHR11692">
    <property type="entry name" value="BIFUNCTIONAL PURINE BIOSYNTHESIS PROTEIN PURH"/>
    <property type="match status" value="1"/>
</dbReference>
<dbReference type="Pfam" id="PF01808">
    <property type="entry name" value="AICARFT_IMPCHas"/>
    <property type="match status" value="1"/>
</dbReference>
<dbReference type="Pfam" id="PF02142">
    <property type="entry name" value="MGS"/>
    <property type="match status" value="1"/>
</dbReference>
<dbReference type="PIRSF" id="PIRSF000414">
    <property type="entry name" value="AICARFT_IMPCHas"/>
    <property type="match status" value="1"/>
</dbReference>
<dbReference type="SMART" id="SM00798">
    <property type="entry name" value="AICARFT_IMPCHas"/>
    <property type="match status" value="1"/>
</dbReference>
<dbReference type="SMART" id="SM00851">
    <property type="entry name" value="MGS"/>
    <property type="match status" value="1"/>
</dbReference>
<dbReference type="SUPFAM" id="SSF53927">
    <property type="entry name" value="Cytidine deaminase-like"/>
    <property type="match status" value="1"/>
</dbReference>
<dbReference type="SUPFAM" id="SSF52335">
    <property type="entry name" value="Methylglyoxal synthase-like"/>
    <property type="match status" value="1"/>
</dbReference>
<dbReference type="PROSITE" id="PS51855">
    <property type="entry name" value="MGS"/>
    <property type="match status" value="1"/>
</dbReference>
<keyword id="KW-0378">Hydrolase</keyword>
<keyword id="KW-0511">Multifunctional enzyme</keyword>
<keyword id="KW-0658">Purine biosynthesis</keyword>
<keyword id="KW-1185">Reference proteome</keyword>
<keyword id="KW-0808">Transferase</keyword>
<organism>
    <name type="scientific">Buchnera aphidicola subsp. Baizongia pistaciae (strain Bp)</name>
    <dbReference type="NCBI Taxonomy" id="224915"/>
    <lineage>
        <taxon>Bacteria</taxon>
        <taxon>Pseudomonadati</taxon>
        <taxon>Pseudomonadota</taxon>
        <taxon>Gammaproteobacteria</taxon>
        <taxon>Enterobacterales</taxon>
        <taxon>Erwiniaceae</taxon>
        <taxon>Buchnera</taxon>
    </lineage>
</organism>
<name>PUR9_BUCBP</name>
<feature type="chain" id="PRO_0000192078" description="Bifunctional purine biosynthesis protein PurH">
    <location>
        <begin position="1"/>
        <end position="529"/>
    </location>
</feature>
<feature type="domain" description="MGS-like" evidence="2">
    <location>
        <begin position="1"/>
        <end position="148"/>
    </location>
</feature>
<gene>
    <name evidence="1" type="primary">purH</name>
    <name type="ordered locus">bbp_032</name>
</gene>